<name>5N3BA_XENLA</name>
<dbReference type="EC" id="3.1.3.91" evidence="3"/>
<dbReference type="EC" id="3.1.3.5" evidence="3"/>
<dbReference type="EMBL" id="BC046729">
    <property type="protein sequence ID" value="AAH46729.2"/>
    <property type="molecule type" value="mRNA"/>
</dbReference>
<dbReference type="SMR" id="Q7ZWS2"/>
<dbReference type="AGR" id="Xenbase:XB-GENE-992511"/>
<dbReference type="OMA" id="THFISNM"/>
<dbReference type="Proteomes" id="UP000186698">
    <property type="component" value="Unplaced"/>
</dbReference>
<dbReference type="GO" id="GO:0005737">
    <property type="term" value="C:cytoplasm"/>
    <property type="evidence" value="ECO:0000318"/>
    <property type="project" value="GO_Central"/>
</dbReference>
<dbReference type="GO" id="GO:0016787">
    <property type="term" value="F:hydrolase activity"/>
    <property type="evidence" value="ECO:0007669"/>
    <property type="project" value="UniProtKB-KW"/>
</dbReference>
<dbReference type="GO" id="GO:0000287">
    <property type="term" value="F:magnesium ion binding"/>
    <property type="evidence" value="ECO:0007669"/>
    <property type="project" value="InterPro"/>
</dbReference>
<dbReference type="GO" id="GO:0000166">
    <property type="term" value="F:nucleotide binding"/>
    <property type="evidence" value="ECO:0007669"/>
    <property type="project" value="UniProtKB-KW"/>
</dbReference>
<dbReference type="GO" id="GO:0009117">
    <property type="term" value="P:nucleotide metabolic process"/>
    <property type="evidence" value="ECO:0007669"/>
    <property type="project" value="UniProtKB-KW"/>
</dbReference>
<dbReference type="CDD" id="cd07504">
    <property type="entry name" value="HAD_5NT"/>
    <property type="match status" value="1"/>
</dbReference>
<dbReference type="FunFam" id="1.10.150.340:FF:000001">
    <property type="entry name" value="Cytosolic 5-nucleotidase 3-like"/>
    <property type="match status" value="1"/>
</dbReference>
<dbReference type="FunFam" id="3.40.50.1000:FF:000032">
    <property type="entry name" value="Cytosolic 5-nucleotidase 3-like"/>
    <property type="match status" value="1"/>
</dbReference>
<dbReference type="Gene3D" id="3.40.50.1000">
    <property type="entry name" value="HAD superfamily/HAD-like"/>
    <property type="match status" value="1"/>
</dbReference>
<dbReference type="Gene3D" id="1.10.150.340">
    <property type="entry name" value="Pyrimidine 5'-nucleotidase (UMPH-1), N-terminal domain"/>
    <property type="match status" value="1"/>
</dbReference>
<dbReference type="InterPro" id="IPR036412">
    <property type="entry name" value="HAD-like_sf"/>
</dbReference>
<dbReference type="InterPro" id="IPR023214">
    <property type="entry name" value="HAD_sf"/>
</dbReference>
<dbReference type="InterPro" id="IPR006434">
    <property type="entry name" value="Pyrimidine_nucleotidase_eu"/>
</dbReference>
<dbReference type="NCBIfam" id="TIGR01544">
    <property type="entry name" value="HAD-SF-IE"/>
    <property type="match status" value="1"/>
</dbReference>
<dbReference type="PANTHER" id="PTHR13045">
    <property type="entry name" value="5'-NUCLEOTIDASE"/>
    <property type="match status" value="1"/>
</dbReference>
<dbReference type="PANTHER" id="PTHR13045:SF15">
    <property type="entry name" value="7-METHYLGUANOSINE PHOSPHATE-SPECIFIC 5'-NUCLEOTIDASE"/>
    <property type="match status" value="1"/>
</dbReference>
<dbReference type="Pfam" id="PF05822">
    <property type="entry name" value="UMPH-1"/>
    <property type="match status" value="1"/>
</dbReference>
<dbReference type="SFLD" id="SFLDG01128">
    <property type="entry name" value="C1.4:_5'-Nucleotidase_Like"/>
    <property type="match status" value="1"/>
</dbReference>
<dbReference type="SFLD" id="SFLDS00003">
    <property type="entry name" value="Haloacid_Dehalogenase"/>
    <property type="match status" value="1"/>
</dbReference>
<dbReference type="SUPFAM" id="SSF56784">
    <property type="entry name" value="HAD-like"/>
    <property type="match status" value="1"/>
</dbReference>
<proteinExistence type="evidence at transcript level"/>
<evidence type="ECO:0000250" key="1"/>
<evidence type="ECO:0000250" key="2">
    <source>
        <dbReference type="UniProtKB" id="Q9D020"/>
    </source>
</evidence>
<evidence type="ECO:0000250" key="3">
    <source>
        <dbReference type="UniProtKB" id="Q9H0P0"/>
    </source>
</evidence>
<evidence type="ECO:0000250" key="4">
    <source>
        <dbReference type="UniProtKB" id="Q9W197"/>
    </source>
</evidence>
<evidence type="ECO:0000305" key="5"/>
<accession>Q7ZWS2</accession>
<organism>
    <name type="scientific">Xenopus laevis</name>
    <name type="common">African clawed frog</name>
    <dbReference type="NCBI Taxonomy" id="8355"/>
    <lineage>
        <taxon>Eukaryota</taxon>
        <taxon>Metazoa</taxon>
        <taxon>Chordata</taxon>
        <taxon>Craniata</taxon>
        <taxon>Vertebrata</taxon>
        <taxon>Euteleostomi</taxon>
        <taxon>Amphibia</taxon>
        <taxon>Batrachia</taxon>
        <taxon>Anura</taxon>
        <taxon>Pipoidea</taxon>
        <taxon>Pipidae</taxon>
        <taxon>Xenopodinae</taxon>
        <taxon>Xenopus</taxon>
        <taxon>Xenopus</taxon>
    </lineage>
</organism>
<keyword id="KW-0963">Cytoplasm</keyword>
<keyword id="KW-0378">Hydrolase</keyword>
<keyword id="KW-0460">Magnesium</keyword>
<keyword id="KW-0479">Metal-binding</keyword>
<keyword id="KW-0546">Nucleotide metabolism</keyword>
<keyword id="KW-0547">Nucleotide-binding</keyword>
<keyword id="KW-1185">Reference proteome</keyword>
<sequence length="290" mass="33500">MRLPVLGKDTVRMRDPEGLQDKITRIQRGGQEKLQIISDFDMTLSRFSRNGERCPTCYNIIDNSNIISDEGRKKLKCLFDIYYPLEIDPKKSIEEKYPLMVEWWSKAHDLFYEQRIQKDRLAQVVKESQATLRDGYDLFFNSLYQREIPLFIFSAGIGDVLEEIIRQAGVFHPNTKVVSNYMDFDDNGILTGFKGDLIHTYNKNSSVLKDTEYFKEISHRTNILLLGDTLGDLTMADGVSTVENIIKIGFLNDKVEELTEQFLQSYDIVLLRDETLDVVNGILQFVTAKN</sequence>
<protein>
    <recommendedName>
        <fullName evidence="3">7-methylguanosine phosphate-specific 5'-nucleotidase A</fullName>
        <shortName>7-methylguanosine nucleotidase A</shortName>
        <ecNumber evidence="3">3.1.3.91</ecNumber>
    </recommendedName>
    <alternativeName>
        <fullName>Cytosolic 5'-nucleotidase 3B-A</fullName>
    </alternativeName>
    <alternativeName>
        <fullName evidence="3">Cytosolic 5'-nucleotidase III-like protein A</fullName>
        <shortName>cN-III-like protein A</shortName>
        <ecNumber evidence="3">3.1.3.5</ecNumber>
    </alternativeName>
    <alternativeName>
        <fullName>N(7)-methylguanylate 5'-phosphatase A</fullName>
    </alternativeName>
</protein>
<feature type="chain" id="PRO_0000328953" description="7-methylguanosine phosphate-specific 5'-nucleotidase A">
    <location>
        <begin position="1"/>
        <end position="290"/>
    </location>
</feature>
<feature type="active site" description="Nucleophile" evidence="3">
    <location>
        <position position="39"/>
    </location>
</feature>
<feature type="active site" description="Proton donor" evidence="3">
    <location>
        <position position="41"/>
    </location>
</feature>
<feature type="binding site" evidence="3">
    <location>
        <position position="39"/>
    </location>
    <ligand>
        <name>Mg(2+)</name>
        <dbReference type="ChEBI" id="CHEBI:18420"/>
    </ligand>
</feature>
<feature type="binding site" evidence="3">
    <location>
        <position position="41"/>
    </location>
    <ligand>
        <name>Mg(2+)</name>
        <dbReference type="ChEBI" id="CHEBI:18420"/>
    </ligand>
</feature>
<feature type="binding site" evidence="4">
    <location>
        <position position="86"/>
    </location>
    <ligand>
        <name>CMP</name>
        <dbReference type="ChEBI" id="CHEBI:60377"/>
    </ligand>
</feature>
<feature type="binding site" evidence="4">
    <location>
        <position position="86"/>
    </location>
    <ligand>
        <name>N(7)-methyl-GMP</name>
        <dbReference type="ChEBI" id="CHEBI:58285"/>
    </ligand>
</feature>
<feature type="binding site" evidence="3">
    <location>
        <begin position="154"/>
        <end position="155"/>
    </location>
    <ligand>
        <name>substrate</name>
    </ligand>
</feature>
<feature type="binding site" evidence="2">
    <location>
        <position position="203"/>
    </location>
    <ligand>
        <name>substrate</name>
    </ligand>
</feature>
<feature type="binding site" evidence="3">
    <location>
        <position position="228"/>
    </location>
    <ligand>
        <name>Mg(2+)</name>
        <dbReference type="ChEBI" id="CHEBI:18420"/>
    </ligand>
</feature>
<comment type="function">
    <text evidence="1">Specifically hydrolyzes 7-methylguanosine monophosphate (m(7)GMP) to 7-methylguanosine and inorganic phosphate. The specific activity for m(7)GMP may protect cells against undesired salvage of m(7)GMP and its incorporation into nucleic acids. Also has weak activity for CMP. UMP and purine nucleotides are poor substrates (By similarity).</text>
</comment>
<comment type="catalytic activity">
    <reaction evidence="3">
        <text>N(7)-methyl-GMP + H2O = N(7)-methylguanosine + phosphate</text>
        <dbReference type="Rhea" id="RHEA:37107"/>
        <dbReference type="ChEBI" id="CHEBI:15377"/>
        <dbReference type="ChEBI" id="CHEBI:20794"/>
        <dbReference type="ChEBI" id="CHEBI:43474"/>
        <dbReference type="ChEBI" id="CHEBI:58285"/>
        <dbReference type="EC" id="3.1.3.91"/>
    </reaction>
</comment>
<comment type="catalytic activity">
    <reaction evidence="3">
        <text>CMP + H2O = cytidine + phosphate</text>
        <dbReference type="Rhea" id="RHEA:29367"/>
        <dbReference type="ChEBI" id="CHEBI:15377"/>
        <dbReference type="ChEBI" id="CHEBI:17562"/>
        <dbReference type="ChEBI" id="CHEBI:43474"/>
        <dbReference type="ChEBI" id="CHEBI:60377"/>
        <dbReference type="EC" id="3.1.3.91"/>
    </reaction>
</comment>
<comment type="catalytic activity">
    <reaction evidence="3">
        <text>a ribonucleoside 5'-phosphate + H2O = a ribonucleoside + phosphate</text>
        <dbReference type="Rhea" id="RHEA:12484"/>
        <dbReference type="ChEBI" id="CHEBI:15377"/>
        <dbReference type="ChEBI" id="CHEBI:18254"/>
        <dbReference type="ChEBI" id="CHEBI:43474"/>
        <dbReference type="ChEBI" id="CHEBI:58043"/>
        <dbReference type="EC" id="3.1.3.5"/>
    </reaction>
</comment>
<comment type="subunit">
    <text evidence="1">Monomer.</text>
</comment>
<comment type="subcellular location">
    <subcellularLocation>
        <location evidence="5">Cytoplasm</location>
    </subcellularLocation>
</comment>
<comment type="similarity">
    <text evidence="5">Belongs to the pyrimidine 5'-nucleotidase family.</text>
</comment>
<gene>
    <name type="primary">Nt5c3b-a</name>
    <name type="synonym">Nt5c3l-a</name>
</gene>
<reference key="1">
    <citation type="submission" date="2003-02" db="EMBL/GenBank/DDBJ databases">
        <authorList>
            <consortium name="NIH - Xenopus Gene Collection (XGC) project"/>
        </authorList>
    </citation>
    <scope>NUCLEOTIDE SEQUENCE [LARGE SCALE MRNA]</scope>
    <source>
        <tissue>Embryo</tissue>
    </source>
</reference>